<accession>Q662N3</accession>
<name>KCY1_BORGP</name>
<reference key="1">
    <citation type="journal article" date="2004" name="Nucleic Acids Res.">
        <title>Comparative analysis of the Borrelia garinii genome.</title>
        <authorList>
            <person name="Gloeckner G."/>
            <person name="Lehmann R."/>
            <person name="Romualdi A."/>
            <person name="Pradella S."/>
            <person name="Schulte-Spechtel U."/>
            <person name="Schilhabel M."/>
            <person name="Wilske B."/>
            <person name="Suehnel J."/>
            <person name="Platzer M."/>
        </authorList>
    </citation>
    <scope>NUCLEOTIDE SEQUENCE [LARGE SCALE GENOMIC DNA]</scope>
    <source>
        <strain>ATCC BAA-2496 / DSM 23469 / PBi</strain>
    </source>
</reference>
<sequence length="221" mass="25579">MIIAIDGPSASGKSSIARELGVKLGYKFISSGYLYRIITLIAQKFLMSSCDFISEDRLLNLILENDISFNDSSFFLNGENVESQILNDKIDFQVSFYSSYVGIRNIVNKKLREVVKFSNDNYIIEGRDITTIVFPESEFKIYLDASVKVRALRRYKQRNGNETLEELERTLKIRDDVDKRKQYGKLKLSKGVFYLDTSYKGLDDVCNIIIEKFNLKKVRER</sequence>
<evidence type="ECO:0000255" key="1">
    <source>
        <dbReference type="HAMAP-Rule" id="MF_00238"/>
    </source>
</evidence>
<keyword id="KW-0067">ATP-binding</keyword>
<keyword id="KW-0963">Cytoplasm</keyword>
<keyword id="KW-0418">Kinase</keyword>
<keyword id="KW-0547">Nucleotide-binding</keyword>
<keyword id="KW-0808">Transferase</keyword>
<dbReference type="EC" id="2.7.4.25" evidence="1"/>
<dbReference type="EMBL" id="CP000013">
    <property type="protein sequence ID" value="AAU06988.1"/>
    <property type="molecule type" value="Genomic_DNA"/>
</dbReference>
<dbReference type="SMR" id="Q662N3"/>
<dbReference type="GeneID" id="45160924"/>
<dbReference type="KEGG" id="bga:BG0130"/>
<dbReference type="eggNOG" id="COG0283">
    <property type="taxonomic scope" value="Bacteria"/>
</dbReference>
<dbReference type="HOGENOM" id="CLU_079959_0_2_12"/>
<dbReference type="OrthoDB" id="9807434at2"/>
<dbReference type="Proteomes" id="UP000002276">
    <property type="component" value="Chromosome"/>
</dbReference>
<dbReference type="GO" id="GO:0005737">
    <property type="term" value="C:cytoplasm"/>
    <property type="evidence" value="ECO:0007669"/>
    <property type="project" value="UniProtKB-SubCell"/>
</dbReference>
<dbReference type="GO" id="GO:0005524">
    <property type="term" value="F:ATP binding"/>
    <property type="evidence" value="ECO:0007669"/>
    <property type="project" value="UniProtKB-UniRule"/>
</dbReference>
<dbReference type="GO" id="GO:0036430">
    <property type="term" value="F:CMP kinase activity"/>
    <property type="evidence" value="ECO:0007669"/>
    <property type="project" value="RHEA"/>
</dbReference>
<dbReference type="GO" id="GO:0036431">
    <property type="term" value="F:dCMP kinase activity"/>
    <property type="evidence" value="ECO:0007669"/>
    <property type="project" value="RHEA"/>
</dbReference>
<dbReference type="GO" id="GO:0006220">
    <property type="term" value="P:pyrimidine nucleotide metabolic process"/>
    <property type="evidence" value="ECO:0007669"/>
    <property type="project" value="UniProtKB-UniRule"/>
</dbReference>
<dbReference type="CDD" id="cd02020">
    <property type="entry name" value="CMPK"/>
    <property type="match status" value="1"/>
</dbReference>
<dbReference type="Gene3D" id="3.40.50.300">
    <property type="entry name" value="P-loop containing nucleotide triphosphate hydrolases"/>
    <property type="match status" value="1"/>
</dbReference>
<dbReference type="HAMAP" id="MF_00238">
    <property type="entry name" value="Cytidyl_kinase_type1"/>
    <property type="match status" value="1"/>
</dbReference>
<dbReference type="InterPro" id="IPR003136">
    <property type="entry name" value="Cytidylate_kin"/>
</dbReference>
<dbReference type="InterPro" id="IPR011994">
    <property type="entry name" value="Cytidylate_kinase_dom"/>
</dbReference>
<dbReference type="InterPro" id="IPR027417">
    <property type="entry name" value="P-loop_NTPase"/>
</dbReference>
<dbReference type="NCBIfam" id="TIGR00017">
    <property type="entry name" value="cmk"/>
    <property type="match status" value="1"/>
</dbReference>
<dbReference type="Pfam" id="PF02224">
    <property type="entry name" value="Cytidylate_kin"/>
    <property type="match status" value="1"/>
</dbReference>
<dbReference type="SUPFAM" id="SSF52540">
    <property type="entry name" value="P-loop containing nucleoside triphosphate hydrolases"/>
    <property type="match status" value="1"/>
</dbReference>
<proteinExistence type="inferred from homology"/>
<gene>
    <name evidence="1" type="primary">cmk1</name>
    <name type="ordered locus">BG0130</name>
</gene>
<feature type="chain" id="PRO_0000131887" description="Cytidylate kinase 1">
    <location>
        <begin position="1"/>
        <end position="221"/>
    </location>
</feature>
<feature type="binding site" evidence="1">
    <location>
        <begin position="7"/>
        <end position="15"/>
    </location>
    <ligand>
        <name>ATP</name>
        <dbReference type="ChEBI" id="CHEBI:30616"/>
    </ligand>
</feature>
<protein>
    <recommendedName>
        <fullName evidence="1">Cytidylate kinase 1</fullName>
        <shortName evidence="1">CK 1</shortName>
        <ecNumber evidence="1">2.7.4.25</ecNumber>
    </recommendedName>
    <alternativeName>
        <fullName evidence="1">Cytidine monophosphate kinase 1</fullName>
        <shortName evidence="1">CMP kinase 1</shortName>
    </alternativeName>
</protein>
<organism>
    <name type="scientific">Borrelia garinii subsp. bavariensis (strain ATCC BAA-2496 / DSM 23469 / PBi)</name>
    <name type="common">Borreliella bavariensis</name>
    <dbReference type="NCBI Taxonomy" id="290434"/>
    <lineage>
        <taxon>Bacteria</taxon>
        <taxon>Pseudomonadati</taxon>
        <taxon>Spirochaetota</taxon>
        <taxon>Spirochaetia</taxon>
        <taxon>Spirochaetales</taxon>
        <taxon>Borreliaceae</taxon>
        <taxon>Borreliella</taxon>
    </lineage>
</organism>
<comment type="catalytic activity">
    <reaction evidence="1">
        <text>CMP + ATP = CDP + ADP</text>
        <dbReference type="Rhea" id="RHEA:11600"/>
        <dbReference type="ChEBI" id="CHEBI:30616"/>
        <dbReference type="ChEBI" id="CHEBI:58069"/>
        <dbReference type="ChEBI" id="CHEBI:60377"/>
        <dbReference type="ChEBI" id="CHEBI:456216"/>
        <dbReference type="EC" id="2.7.4.25"/>
    </reaction>
</comment>
<comment type="catalytic activity">
    <reaction evidence="1">
        <text>dCMP + ATP = dCDP + ADP</text>
        <dbReference type="Rhea" id="RHEA:25094"/>
        <dbReference type="ChEBI" id="CHEBI:30616"/>
        <dbReference type="ChEBI" id="CHEBI:57566"/>
        <dbReference type="ChEBI" id="CHEBI:58593"/>
        <dbReference type="ChEBI" id="CHEBI:456216"/>
        <dbReference type="EC" id="2.7.4.25"/>
    </reaction>
</comment>
<comment type="subcellular location">
    <subcellularLocation>
        <location evidence="1">Cytoplasm</location>
    </subcellularLocation>
</comment>
<comment type="similarity">
    <text evidence="1">Belongs to the cytidylate kinase family. Type 1 subfamily.</text>
</comment>